<reference key="1">
    <citation type="submission" date="2007-03" db="EMBL/GenBank/DDBJ databases">
        <title>Complete sequence of Prosthecochloris vibrioformis DSM 265.</title>
        <authorList>
            <consortium name="US DOE Joint Genome Institute"/>
            <person name="Copeland A."/>
            <person name="Lucas S."/>
            <person name="Lapidus A."/>
            <person name="Barry K."/>
            <person name="Detter J.C."/>
            <person name="Glavina del Rio T."/>
            <person name="Hammon N."/>
            <person name="Israni S."/>
            <person name="Pitluck S."/>
            <person name="Schmutz J."/>
            <person name="Larimer F."/>
            <person name="Land M."/>
            <person name="Hauser L."/>
            <person name="Mikhailova N."/>
            <person name="Li T."/>
            <person name="Overmann J."/>
            <person name="Schuster S.C."/>
            <person name="Bryant D.A."/>
            <person name="Richardson P."/>
        </authorList>
    </citation>
    <scope>NUCLEOTIDE SEQUENCE [LARGE SCALE GENOMIC DNA]</scope>
    <source>
        <strain>DSM 265 / 1930</strain>
    </source>
</reference>
<keyword id="KW-0963">Cytoplasm</keyword>
<keyword id="KW-0396">Initiation factor</keyword>
<keyword id="KW-0648">Protein biosynthesis</keyword>
<feature type="chain" id="PRO_1000075274" description="Translation initiation factor IF-3">
    <location>
        <begin position="1"/>
        <end position="209"/>
    </location>
</feature>
<gene>
    <name evidence="1" type="primary">infC</name>
    <name type="ordered locus">Cvib_0189</name>
</gene>
<protein>
    <recommendedName>
        <fullName evidence="1">Translation initiation factor IF-3</fullName>
    </recommendedName>
</protein>
<organism>
    <name type="scientific">Chlorobium phaeovibrioides (strain DSM 265 / 1930)</name>
    <name type="common">Prosthecochloris vibrioformis (strain DSM 265)</name>
    <dbReference type="NCBI Taxonomy" id="290318"/>
    <lineage>
        <taxon>Bacteria</taxon>
        <taxon>Pseudomonadati</taxon>
        <taxon>Chlorobiota</taxon>
        <taxon>Chlorobiia</taxon>
        <taxon>Chlorobiales</taxon>
        <taxon>Chlorobiaceae</taxon>
        <taxon>Chlorobium/Pelodictyon group</taxon>
        <taxon>Chlorobium</taxon>
    </lineage>
</organism>
<name>IF3_CHLPM</name>
<accession>A4SCK3</accession>
<evidence type="ECO:0000255" key="1">
    <source>
        <dbReference type="HAMAP-Rule" id="MF_00080"/>
    </source>
</evidence>
<proteinExistence type="inferred from homology"/>
<sequence length="209" mass="24465">MKKQKVTSQKQKITYRVNEQIRVPEVRIIFQDGTQKVMQTAEARRMAEERNTDLIEVQPNAEPPVCKFDNLGKLLFKMAQRDKDLKKKQKTTTLKELRFHPNTDKHDFDFKTAHLEEFLRKGNRVRATIVFLGRSIIYKDKGLELAERLTERLSVVGNRDGDPKFEGKKLFVYFEPDKKKIDAYDRIRTKTGKLAPLPDEPEEDGENND</sequence>
<dbReference type="EMBL" id="CP000607">
    <property type="protein sequence ID" value="ABP36212.1"/>
    <property type="molecule type" value="Genomic_DNA"/>
</dbReference>
<dbReference type="SMR" id="A4SCK3"/>
<dbReference type="STRING" id="290318.Cvib_0189"/>
<dbReference type="KEGG" id="pvi:Cvib_0189"/>
<dbReference type="eggNOG" id="COG0290">
    <property type="taxonomic scope" value="Bacteria"/>
</dbReference>
<dbReference type="HOGENOM" id="CLU_054919_3_0_10"/>
<dbReference type="OrthoDB" id="9806014at2"/>
<dbReference type="GO" id="GO:0005829">
    <property type="term" value="C:cytosol"/>
    <property type="evidence" value="ECO:0007669"/>
    <property type="project" value="TreeGrafter"/>
</dbReference>
<dbReference type="GO" id="GO:0016020">
    <property type="term" value="C:membrane"/>
    <property type="evidence" value="ECO:0007669"/>
    <property type="project" value="TreeGrafter"/>
</dbReference>
<dbReference type="GO" id="GO:0043022">
    <property type="term" value="F:ribosome binding"/>
    <property type="evidence" value="ECO:0007669"/>
    <property type="project" value="TreeGrafter"/>
</dbReference>
<dbReference type="GO" id="GO:0003743">
    <property type="term" value="F:translation initiation factor activity"/>
    <property type="evidence" value="ECO:0007669"/>
    <property type="project" value="UniProtKB-UniRule"/>
</dbReference>
<dbReference type="GO" id="GO:0032790">
    <property type="term" value="P:ribosome disassembly"/>
    <property type="evidence" value="ECO:0007669"/>
    <property type="project" value="TreeGrafter"/>
</dbReference>
<dbReference type="Gene3D" id="3.30.110.10">
    <property type="entry name" value="Translation initiation factor 3 (IF-3), C-terminal domain"/>
    <property type="match status" value="1"/>
</dbReference>
<dbReference type="Gene3D" id="3.10.20.80">
    <property type="entry name" value="Translation initiation factor 3 (IF-3), N-terminal domain"/>
    <property type="match status" value="1"/>
</dbReference>
<dbReference type="HAMAP" id="MF_00080">
    <property type="entry name" value="IF_3"/>
    <property type="match status" value="1"/>
</dbReference>
<dbReference type="InterPro" id="IPR036788">
    <property type="entry name" value="T_IF-3_C_sf"/>
</dbReference>
<dbReference type="InterPro" id="IPR036787">
    <property type="entry name" value="T_IF-3_N_sf"/>
</dbReference>
<dbReference type="InterPro" id="IPR001288">
    <property type="entry name" value="Translation_initiation_fac_3"/>
</dbReference>
<dbReference type="InterPro" id="IPR019815">
    <property type="entry name" value="Translation_initiation_fac_3_C"/>
</dbReference>
<dbReference type="InterPro" id="IPR019814">
    <property type="entry name" value="Translation_initiation_fac_3_N"/>
</dbReference>
<dbReference type="NCBIfam" id="TIGR00168">
    <property type="entry name" value="infC"/>
    <property type="match status" value="1"/>
</dbReference>
<dbReference type="PANTHER" id="PTHR10938">
    <property type="entry name" value="TRANSLATION INITIATION FACTOR IF-3"/>
    <property type="match status" value="1"/>
</dbReference>
<dbReference type="PANTHER" id="PTHR10938:SF0">
    <property type="entry name" value="TRANSLATION INITIATION FACTOR IF-3, MITOCHONDRIAL"/>
    <property type="match status" value="1"/>
</dbReference>
<dbReference type="Pfam" id="PF00707">
    <property type="entry name" value="IF3_C"/>
    <property type="match status" value="1"/>
</dbReference>
<dbReference type="Pfam" id="PF05198">
    <property type="entry name" value="IF3_N"/>
    <property type="match status" value="1"/>
</dbReference>
<dbReference type="SUPFAM" id="SSF55200">
    <property type="entry name" value="Translation initiation factor IF3, C-terminal domain"/>
    <property type="match status" value="1"/>
</dbReference>
<dbReference type="SUPFAM" id="SSF54364">
    <property type="entry name" value="Translation initiation factor IF3, N-terminal domain"/>
    <property type="match status" value="1"/>
</dbReference>
<comment type="function">
    <text evidence="1">IF-3 binds to the 30S ribosomal subunit and shifts the equilibrium between 70S ribosomes and their 50S and 30S subunits in favor of the free subunits, thus enhancing the availability of 30S subunits on which protein synthesis initiation begins.</text>
</comment>
<comment type="subunit">
    <text evidence="1">Monomer.</text>
</comment>
<comment type="subcellular location">
    <subcellularLocation>
        <location evidence="1">Cytoplasm</location>
    </subcellularLocation>
</comment>
<comment type="similarity">
    <text evidence="1">Belongs to the IF-3 family.</text>
</comment>